<organism>
    <name type="scientific">Methylorubrum extorquens (strain PA1)</name>
    <name type="common">Methylobacterium extorquens</name>
    <dbReference type="NCBI Taxonomy" id="419610"/>
    <lineage>
        <taxon>Bacteria</taxon>
        <taxon>Pseudomonadati</taxon>
        <taxon>Pseudomonadota</taxon>
        <taxon>Alphaproteobacteria</taxon>
        <taxon>Hyphomicrobiales</taxon>
        <taxon>Methylobacteriaceae</taxon>
        <taxon>Methylorubrum</taxon>
    </lineage>
</organism>
<accession>A9W067</accession>
<keyword id="KW-0963">Cytoplasm</keyword>
<keyword id="KW-0275">Fatty acid biosynthesis</keyword>
<keyword id="KW-0276">Fatty acid metabolism</keyword>
<keyword id="KW-0444">Lipid biosynthesis</keyword>
<keyword id="KW-0443">Lipid metabolism</keyword>
<keyword id="KW-0596">Phosphopantetheine</keyword>
<keyword id="KW-0597">Phosphoprotein</keyword>
<feature type="chain" id="PRO_1000139041" description="Acyl carrier protein">
    <location>
        <begin position="1"/>
        <end position="78"/>
    </location>
</feature>
<feature type="domain" description="Carrier" evidence="2">
    <location>
        <begin position="2"/>
        <end position="77"/>
    </location>
</feature>
<feature type="modified residue" description="O-(pantetheine 4'-phosphoryl)serine" evidence="2">
    <location>
        <position position="37"/>
    </location>
</feature>
<evidence type="ECO:0000255" key="1">
    <source>
        <dbReference type="HAMAP-Rule" id="MF_01217"/>
    </source>
</evidence>
<evidence type="ECO:0000255" key="2">
    <source>
        <dbReference type="PROSITE-ProRule" id="PRU00258"/>
    </source>
</evidence>
<comment type="function">
    <text evidence="1">Carrier of the growing fatty acid chain in fatty acid biosynthesis.</text>
</comment>
<comment type="pathway">
    <text evidence="1">Lipid metabolism; fatty acid biosynthesis.</text>
</comment>
<comment type="subcellular location">
    <subcellularLocation>
        <location evidence="1">Cytoplasm</location>
    </subcellularLocation>
</comment>
<comment type="PTM">
    <text evidence="1">4'-phosphopantetheine is transferred from CoA to a specific serine of apo-ACP by AcpS. This modification is essential for activity because fatty acids are bound in thioester linkage to the sulfhydryl of the prosthetic group.</text>
</comment>
<comment type="similarity">
    <text evidence="1">Belongs to the acyl carrier protein (ACP) family.</text>
</comment>
<name>ACP_METEP</name>
<proteinExistence type="inferred from homology"/>
<sequence>MSDIAERVKKIVVEHLGVEPEKVTEASNFIDDLGADSLDTVELVMAFEEEFNVEIPDDAAETIQTVGDAIKFLEKNSA</sequence>
<dbReference type="EMBL" id="CP000908">
    <property type="protein sequence ID" value="ABY28973.1"/>
    <property type="molecule type" value="Genomic_DNA"/>
</dbReference>
<dbReference type="RefSeq" id="WP_003599981.1">
    <property type="nucleotide sequence ID" value="NC_010172.1"/>
</dbReference>
<dbReference type="SMR" id="A9W067"/>
<dbReference type="KEGG" id="mex:Mext_0558"/>
<dbReference type="eggNOG" id="COG0236">
    <property type="taxonomic scope" value="Bacteria"/>
</dbReference>
<dbReference type="HOGENOM" id="CLU_108696_5_1_5"/>
<dbReference type="BioCyc" id="MEXT419610:MEXT_RS02725-MONOMER"/>
<dbReference type="UniPathway" id="UPA00094"/>
<dbReference type="GO" id="GO:0005829">
    <property type="term" value="C:cytosol"/>
    <property type="evidence" value="ECO:0007669"/>
    <property type="project" value="TreeGrafter"/>
</dbReference>
<dbReference type="GO" id="GO:0016020">
    <property type="term" value="C:membrane"/>
    <property type="evidence" value="ECO:0007669"/>
    <property type="project" value="GOC"/>
</dbReference>
<dbReference type="GO" id="GO:0000035">
    <property type="term" value="F:acyl binding"/>
    <property type="evidence" value="ECO:0007669"/>
    <property type="project" value="TreeGrafter"/>
</dbReference>
<dbReference type="GO" id="GO:0000036">
    <property type="term" value="F:acyl carrier activity"/>
    <property type="evidence" value="ECO:0007669"/>
    <property type="project" value="UniProtKB-UniRule"/>
</dbReference>
<dbReference type="GO" id="GO:0031177">
    <property type="term" value="F:phosphopantetheine binding"/>
    <property type="evidence" value="ECO:0007669"/>
    <property type="project" value="InterPro"/>
</dbReference>
<dbReference type="GO" id="GO:0009245">
    <property type="term" value="P:lipid A biosynthetic process"/>
    <property type="evidence" value="ECO:0007669"/>
    <property type="project" value="TreeGrafter"/>
</dbReference>
<dbReference type="FunFam" id="1.10.1200.10:FF:000001">
    <property type="entry name" value="Acyl carrier protein"/>
    <property type="match status" value="1"/>
</dbReference>
<dbReference type="Gene3D" id="1.10.1200.10">
    <property type="entry name" value="ACP-like"/>
    <property type="match status" value="1"/>
</dbReference>
<dbReference type="HAMAP" id="MF_01217">
    <property type="entry name" value="Acyl_carrier"/>
    <property type="match status" value="1"/>
</dbReference>
<dbReference type="InterPro" id="IPR003231">
    <property type="entry name" value="ACP"/>
</dbReference>
<dbReference type="InterPro" id="IPR036736">
    <property type="entry name" value="ACP-like_sf"/>
</dbReference>
<dbReference type="InterPro" id="IPR020806">
    <property type="entry name" value="PKS_PP-bd"/>
</dbReference>
<dbReference type="InterPro" id="IPR009081">
    <property type="entry name" value="PP-bd_ACP"/>
</dbReference>
<dbReference type="InterPro" id="IPR006162">
    <property type="entry name" value="Ppantetheine_attach_site"/>
</dbReference>
<dbReference type="NCBIfam" id="TIGR00517">
    <property type="entry name" value="acyl_carrier"/>
    <property type="match status" value="1"/>
</dbReference>
<dbReference type="NCBIfam" id="NF002148">
    <property type="entry name" value="PRK00982.1-2"/>
    <property type="match status" value="1"/>
</dbReference>
<dbReference type="NCBIfam" id="NF002149">
    <property type="entry name" value="PRK00982.1-3"/>
    <property type="match status" value="1"/>
</dbReference>
<dbReference type="NCBIfam" id="NF002150">
    <property type="entry name" value="PRK00982.1-4"/>
    <property type="match status" value="1"/>
</dbReference>
<dbReference type="NCBIfam" id="NF002151">
    <property type="entry name" value="PRK00982.1-5"/>
    <property type="match status" value="1"/>
</dbReference>
<dbReference type="PANTHER" id="PTHR20863">
    <property type="entry name" value="ACYL CARRIER PROTEIN"/>
    <property type="match status" value="1"/>
</dbReference>
<dbReference type="PANTHER" id="PTHR20863:SF76">
    <property type="entry name" value="CARRIER DOMAIN-CONTAINING PROTEIN"/>
    <property type="match status" value="1"/>
</dbReference>
<dbReference type="Pfam" id="PF00550">
    <property type="entry name" value="PP-binding"/>
    <property type="match status" value="1"/>
</dbReference>
<dbReference type="SMART" id="SM00823">
    <property type="entry name" value="PKS_PP"/>
    <property type="match status" value="1"/>
</dbReference>
<dbReference type="SUPFAM" id="SSF47336">
    <property type="entry name" value="ACP-like"/>
    <property type="match status" value="1"/>
</dbReference>
<dbReference type="PROSITE" id="PS50075">
    <property type="entry name" value="CARRIER"/>
    <property type="match status" value="1"/>
</dbReference>
<dbReference type="PROSITE" id="PS00012">
    <property type="entry name" value="PHOSPHOPANTETHEINE"/>
    <property type="match status" value="1"/>
</dbReference>
<protein>
    <recommendedName>
        <fullName evidence="1">Acyl carrier protein</fullName>
        <shortName evidence="1">ACP</shortName>
    </recommendedName>
</protein>
<gene>
    <name evidence="1" type="primary">acpP</name>
    <name type="ordered locus">Mext_0558</name>
</gene>
<reference key="1">
    <citation type="submission" date="2007-12" db="EMBL/GenBank/DDBJ databases">
        <title>Complete sequence of Methylobacterium extorquens PA1.</title>
        <authorList>
            <consortium name="US DOE Joint Genome Institute"/>
            <person name="Copeland A."/>
            <person name="Lucas S."/>
            <person name="Lapidus A."/>
            <person name="Barry K."/>
            <person name="Glavina del Rio T."/>
            <person name="Dalin E."/>
            <person name="Tice H."/>
            <person name="Pitluck S."/>
            <person name="Saunders E."/>
            <person name="Brettin T."/>
            <person name="Bruce D."/>
            <person name="Detter J.C."/>
            <person name="Han C."/>
            <person name="Schmutz J."/>
            <person name="Larimer F."/>
            <person name="Land M."/>
            <person name="Hauser L."/>
            <person name="Kyrpides N."/>
            <person name="Kim E."/>
            <person name="Marx C."/>
            <person name="Richardson P."/>
        </authorList>
    </citation>
    <scope>NUCLEOTIDE SEQUENCE [LARGE SCALE GENOMIC DNA]</scope>
    <source>
        <strain>PA1</strain>
    </source>
</reference>